<reference key="1">
    <citation type="journal article" date="2003" name="DNA Res.">
        <title>Prediction of the coding sequences of mouse homologues of KIAA gene: III. The complete nucleotide sequences of 500 mouse KIAA-homologous cDNAs identified by screening of terminal sequences of cDNA clones randomly sampled from size-fractionated libraries.</title>
        <authorList>
            <person name="Okazaki N."/>
            <person name="Kikuno R."/>
            <person name="Ohara R."/>
            <person name="Inamoto S."/>
            <person name="Koseki H."/>
            <person name="Hiraoka S."/>
            <person name="Saga Y."/>
            <person name="Nagase T."/>
            <person name="Ohara O."/>
            <person name="Koga H."/>
        </authorList>
    </citation>
    <scope>NUCLEOTIDE SEQUENCE [LARGE SCALE MRNA]</scope>
    <source>
        <tissue>Embryonic tail</tissue>
    </source>
</reference>
<reference key="2">
    <citation type="journal article" date="2004" name="Genome Res.">
        <title>The status, quality, and expansion of the NIH full-length cDNA project: the Mammalian Gene Collection (MGC).</title>
        <authorList>
            <consortium name="The MGC Project Team"/>
        </authorList>
    </citation>
    <scope>NUCLEOTIDE SEQUENCE [LARGE SCALE MRNA]</scope>
    <source>
        <strain>C57BL/6J</strain>
        <tissue>Brain</tissue>
    </source>
</reference>
<reference key="3">
    <citation type="journal article" date="2002" name="Biochem. Biophys. Res. Commun.">
        <title>TBP-interacting protein 120B, which is induced in relation to myogenesis, binds to NOT3.</title>
        <authorList>
            <person name="Aoki T."/>
            <person name="Okada N."/>
            <person name="Wakamatsu T."/>
            <person name="Tamura T.-A."/>
        </authorList>
    </citation>
    <scope>INTERACTION WITH CNOT3 AND TBP</scope>
    <scope>SUBCELLULAR LOCATION</scope>
    <scope>TISSUE SPECIFICITY</scope>
</reference>
<reference key="4">
    <citation type="journal article" date="2010" name="Cell">
        <title>A tissue-specific atlas of mouse protein phosphorylation and expression.</title>
        <authorList>
            <person name="Huttlin E.L."/>
            <person name="Jedrychowski M.P."/>
            <person name="Elias J.E."/>
            <person name="Goswami T."/>
            <person name="Rad R."/>
            <person name="Beausoleil S.A."/>
            <person name="Villen J."/>
            <person name="Haas W."/>
            <person name="Sowa M.E."/>
            <person name="Gygi S.P."/>
        </authorList>
    </citation>
    <scope>IDENTIFICATION BY MASS SPECTROMETRY [LARGE SCALE ANALYSIS]</scope>
    <source>
        <tissue>Brain</tissue>
        <tissue>Brown adipose tissue</tissue>
        <tissue>Heart</tissue>
        <tissue>Lung</tissue>
        <tissue>Pancreas</tissue>
        <tissue>Spleen</tissue>
        <tissue>Testis</tissue>
    </source>
</reference>
<accession>Q6ZQ73</accession>
<accession>Q6PHT7</accession>
<proteinExistence type="evidence at protein level"/>
<gene>
    <name type="primary">Cand2</name>
    <name type="synonym">Kiaa0667</name>
    <name type="synonym">Tip120b</name>
</gene>
<feature type="initiator methionine" description="Removed" evidence="2">
    <location>
        <position position="1"/>
    </location>
</feature>
<feature type="chain" id="PRO_0000089298" description="Cullin-associated NEDD8-dissociated protein 2">
    <location>
        <begin position="2"/>
        <end position="1235"/>
    </location>
</feature>
<feature type="repeat" description="HEAT 1">
    <location>
        <begin position="2"/>
        <end position="39"/>
    </location>
</feature>
<feature type="repeat" description="HEAT 2">
    <location>
        <begin position="44"/>
        <end position="81"/>
    </location>
</feature>
<feature type="repeat" description="HEAT 3">
    <location>
        <begin position="83"/>
        <end position="119"/>
    </location>
</feature>
<feature type="repeat" description="HEAT 4">
    <location>
        <begin position="129"/>
        <end position="167"/>
    </location>
</feature>
<feature type="repeat" description="HEAT 5">
    <location>
        <begin position="171"/>
        <end position="208"/>
    </location>
</feature>
<feature type="repeat" description="HEAT 6">
    <location>
        <begin position="210"/>
        <end position="246"/>
    </location>
</feature>
<feature type="repeat" description="HEAT 7">
    <location>
        <begin position="254"/>
        <end position="291"/>
    </location>
</feature>
<feature type="repeat" description="HEAT 8">
    <location>
        <begin position="326"/>
        <end position="367"/>
    </location>
</feature>
<feature type="repeat" description="HEAT 9">
    <location>
        <begin position="371"/>
        <end position="408"/>
    </location>
</feature>
<feature type="repeat" description="HEAT 10">
    <location>
        <begin position="431"/>
        <end position="468"/>
    </location>
</feature>
<feature type="repeat" description="HEAT 11">
    <location>
        <begin position="516"/>
        <end position="553"/>
    </location>
</feature>
<feature type="repeat" description="HEAT 12">
    <location>
        <begin position="564"/>
        <end position="603"/>
    </location>
</feature>
<feature type="repeat" description="HEAT 13">
    <location>
        <begin position="607"/>
        <end position="644"/>
    </location>
</feature>
<feature type="repeat" description="HEAT 14">
    <location>
        <begin position="647"/>
        <end position="684"/>
    </location>
</feature>
<feature type="repeat" description="HEAT 15">
    <location>
        <begin position="689"/>
        <end position="726"/>
    </location>
</feature>
<feature type="repeat" description="HEAT 16">
    <location>
        <begin position="730"/>
        <end position="769"/>
    </location>
</feature>
<feature type="repeat" description="HEAT 17">
    <location>
        <begin position="771"/>
        <end position="812"/>
    </location>
</feature>
<feature type="repeat" description="HEAT 18">
    <location>
        <begin position="856"/>
        <end position="893"/>
    </location>
</feature>
<feature type="repeat" description="HEAT 19">
    <location>
        <begin position="895"/>
        <end position="930"/>
    </location>
</feature>
<feature type="repeat" description="HEAT 20">
    <location>
        <begin position="932"/>
        <end position="965"/>
    </location>
</feature>
<feature type="repeat" description="HEAT 21">
    <location>
        <begin position="966"/>
        <end position="1002"/>
    </location>
</feature>
<feature type="repeat" description="HEAT 22">
    <location>
        <begin position="1006"/>
        <end position="1043"/>
    </location>
</feature>
<feature type="repeat" description="HEAT 23">
    <location>
        <begin position="1047"/>
        <end position="1083"/>
    </location>
</feature>
<feature type="repeat" description="HEAT 24">
    <location>
        <begin position="1104"/>
        <end position="1140"/>
    </location>
</feature>
<feature type="repeat" description="HEAT 25">
    <location>
        <begin position="1156"/>
        <end position="1193"/>
    </location>
</feature>
<feature type="repeat" description="HEAT 26">
    <location>
        <begin position="1203"/>
        <end position="1235"/>
    </location>
</feature>
<feature type="region of interest" description="Disordered" evidence="3">
    <location>
        <begin position="314"/>
        <end position="345"/>
    </location>
</feature>
<feature type="compositionally biased region" description="Acidic residues" evidence="3">
    <location>
        <begin position="317"/>
        <end position="345"/>
    </location>
</feature>
<feature type="modified residue" description="N-acetylserine" evidence="2">
    <location>
        <position position="2"/>
    </location>
</feature>
<feature type="sequence conflict" description="In Ref. 2; AAH56365." evidence="5" ref="2">
    <original>I</original>
    <variation>F</variation>
    <location>
        <position position="1129"/>
    </location>
</feature>
<name>CAND2_MOUSE</name>
<dbReference type="EMBL" id="AK129186">
    <property type="protein sequence ID" value="BAC97996.1"/>
    <property type="status" value="ALT_INIT"/>
    <property type="molecule type" value="mRNA"/>
</dbReference>
<dbReference type="EMBL" id="BC056365">
    <property type="protein sequence ID" value="AAH56365.1"/>
    <property type="molecule type" value="mRNA"/>
</dbReference>
<dbReference type="CCDS" id="CCDS20442.1"/>
<dbReference type="RefSeq" id="NP_080234.2">
    <property type="nucleotide sequence ID" value="NM_025958.2"/>
</dbReference>
<dbReference type="SMR" id="Q6ZQ73"/>
<dbReference type="BioGRID" id="211931">
    <property type="interactions" value="11"/>
</dbReference>
<dbReference type="FunCoup" id="Q6ZQ73">
    <property type="interactions" value="1907"/>
</dbReference>
<dbReference type="IntAct" id="Q6ZQ73">
    <property type="interactions" value="3"/>
</dbReference>
<dbReference type="STRING" id="10090.ENSMUSP00000075377"/>
<dbReference type="GlyGen" id="Q6ZQ73">
    <property type="glycosylation" value="1 site, 1 O-linked glycan (1 site)"/>
</dbReference>
<dbReference type="iPTMnet" id="Q6ZQ73"/>
<dbReference type="PhosphoSitePlus" id="Q6ZQ73"/>
<dbReference type="jPOST" id="Q6ZQ73"/>
<dbReference type="PaxDb" id="10090-ENSMUSP00000075377"/>
<dbReference type="PeptideAtlas" id="Q6ZQ73"/>
<dbReference type="ProteomicsDB" id="265527"/>
<dbReference type="Pumba" id="Q6ZQ73"/>
<dbReference type="Antibodypedia" id="5869">
    <property type="antibodies" value="66 antibodies from 21 providers"/>
</dbReference>
<dbReference type="DNASU" id="67088"/>
<dbReference type="Ensembl" id="ENSMUST00000075995.7">
    <property type="protein sequence ID" value="ENSMUSP00000075377.6"/>
    <property type="gene ID" value="ENSMUSG00000030319.9"/>
</dbReference>
<dbReference type="GeneID" id="67088"/>
<dbReference type="KEGG" id="mmu:67088"/>
<dbReference type="UCSC" id="uc009djb.2">
    <property type="organism name" value="mouse"/>
</dbReference>
<dbReference type="AGR" id="MGI:1914338"/>
<dbReference type="CTD" id="23066"/>
<dbReference type="MGI" id="MGI:1914338">
    <property type="gene designation" value="Cand2"/>
</dbReference>
<dbReference type="VEuPathDB" id="HostDB:ENSMUSG00000030319"/>
<dbReference type="eggNOG" id="KOG1824">
    <property type="taxonomic scope" value="Eukaryota"/>
</dbReference>
<dbReference type="GeneTree" id="ENSGT00390000017740"/>
<dbReference type="HOGENOM" id="CLU_007157_0_0_1"/>
<dbReference type="InParanoid" id="Q6ZQ73"/>
<dbReference type="OMA" id="WKLRMWA"/>
<dbReference type="OrthoDB" id="6260732at2759"/>
<dbReference type="PhylomeDB" id="Q6ZQ73"/>
<dbReference type="TreeFam" id="TF300355"/>
<dbReference type="BioGRID-ORCS" id="67088">
    <property type="hits" value="0 hits in 79 CRISPR screens"/>
</dbReference>
<dbReference type="ChiTaRS" id="Cand2">
    <property type="organism name" value="mouse"/>
</dbReference>
<dbReference type="PRO" id="PR:Q6ZQ73"/>
<dbReference type="Proteomes" id="UP000000589">
    <property type="component" value="Chromosome 6"/>
</dbReference>
<dbReference type="RNAct" id="Q6ZQ73">
    <property type="molecule type" value="protein"/>
</dbReference>
<dbReference type="Bgee" id="ENSMUSG00000030319">
    <property type="expression patterns" value="Expressed in interventricular septum and 171 other cell types or tissues"/>
</dbReference>
<dbReference type="GO" id="GO:0005829">
    <property type="term" value="C:cytosol"/>
    <property type="evidence" value="ECO:0007669"/>
    <property type="project" value="Ensembl"/>
</dbReference>
<dbReference type="GO" id="GO:0005634">
    <property type="term" value="C:nucleus"/>
    <property type="evidence" value="ECO:0000314"/>
    <property type="project" value="MGI"/>
</dbReference>
<dbReference type="GO" id="GO:0017025">
    <property type="term" value="F:TBP-class protein binding"/>
    <property type="evidence" value="ECO:0000314"/>
    <property type="project" value="MGI"/>
</dbReference>
<dbReference type="GO" id="GO:0010265">
    <property type="term" value="P:SCF complex assembly"/>
    <property type="evidence" value="ECO:0007669"/>
    <property type="project" value="InterPro"/>
</dbReference>
<dbReference type="FunFam" id="1.25.10.10:FF:000047">
    <property type="entry name" value="Cullin-associated NEDD8-dissociated protein 1"/>
    <property type="match status" value="1"/>
</dbReference>
<dbReference type="Gene3D" id="1.25.10.10">
    <property type="entry name" value="Leucine-rich Repeat Variant"/>
    <property type="match status" value="1"/>
</dbReference>
<dbReference type="InterPro" id="IPR011989">
    <property type="entry name" value="ARM-like"/>
</dbReference>
<dbReference type="InterPro" id="IPR016024">
    <property type="entry name" value="ARM-type_fold"/>
</dbReference>
<dbReference type="InterPro" id="IPR039852">
    <property type="entry name" value="CAND1/CAND2"/>
</dbReference>
<dbReference type="InterPro" id="IPR000357">
    <property type="entry name" value="HEAT"/>
</dbReference>
<dbReference type="InterPro" id="IPR013932">
    <property type="entry name" value="TATA-bd_TIP120"/>
</dbReference>
<dbReference type="PANTHER" id="PTHR12696">
    <property type="entry name" value="TIP120"/>
    <property type="match status" value="1"/>
</dbReference>
<dbReference type="Pfam" id="PF02985">
    <property type="entry name" value="HEAT"/>
    <property type="match status" value="1"/>
</dbReference>
<dbReference type="Pfam" id="PF08623">
    <property type="entry name" value="TIP120"/>
    <property type="match status" value="1"/>
</dbReference>
<dbReference type="SUPFAM" id="SSF48371">
    <property type="entry name" value="ARM repeat"/>
    <property type="match status" value="1"/>
</dbReference>
<protein>
    <recommendedName>
        <fullName>Cullin-associated NEDD8-dissociated protein 2</fullName>
    </recommendedName>
    <alternativeName>
        <fullName>Cullin-associated and neddylation-dissociated protein 2</fullName>
    </alternativeName>
    <alternativeName>
        <fullName>TBP-interacting protein of 120 kDa B</fullName>
        <shortName>TBP-interacting protein 120B</shortName>
    </alternativeName>
    <alternativeName>
        <fullName>p120 CAND2</fullName>
    </alternativeName>
</protein>
<keyword id="KW-0007">Acetylation</keyword>
<keyword id="KW-0539">Nucleus</keyword>
<keyword id="KW-1185">Reference proteome</keyword>
<keyword id="KW-0677">Repeat</keyword>
<keyword id="KW-0832">Ubl conjugation</keyword>
<keyword id="KW-0833">Ubl conjugation pathway</keyword>
<sequence>MSTGAFYISSLLEKMTSSDKDFRFMATSDLMSELQKDSIQLDEDSERKVVRTLLRLLEDRSGEVQNLAVKCLGPLVGKVKEYQVENIVDTLCANMRSDKEQLRDIAGIGLKTVLSELPPAATGSGLAINVCRKITGQLTSAIAQQEDVAVQLEALDILSDMLSRLGAPLGTFHASLLHCLLPQLSSPRLAVRKRTVVALGHLAAACSTDLFVELADHLVDRLPGPRAPASPAAIRTLIQCLGSVGRQAGHRLGAHLDRLVPMVEEFCNLDDDELRESCLQAFEAFLRKCPKEMDPHVPNVTSLCLQYMKHDPNYDHDSDDEEQMETEDSEFSEQESEDEYSDDDDMSWKVRRAAAKCMAALISSRPDLLPDFHCTLAPALIRRFKEREENVKADIFGAYIMLLRHTRPPKGWLEAVEEPTQTGRNLNMLRAQVPLVIKALQRQLKDRNVRTRQGCFNLFTELAGVLPGSLAEHMAVLVSGIVFSLADYSSSSTIRMDALAFLQGLLGTEPAEAFHPHLPTLLPPVMACVADPFYKVAAEALLVLQELVRTLWPLDRPRLLDPEPYVGEMSTATLARLRATDLDQEVKERAISCVGHLVGHLGDRLGDDLEPTLMLLLDRLRNEITRLPAVKALTLVAMSPLRLDLQPILAEALPILASFLRKNQRALRLATLAALDALAQSQGLGLPPPAVRTVLTELPALVSENDMHVAQLAVDFLTTVTQTQPSSLVEVSGPVLGELLQLLHSPLLPAGVLAATEGFLQALVGTRPPCVEYSELISLLTAPVYNQVGDGGPGLHKQVFHSLARCVAALSAACPQEAAGTASRLVCDAKSPHSSTGVKVLAFLSLAEVGQVAGPGPQRELKTVLLEALGSPSEDVRAAAAYALGRVGAGNLPDFLPFLLAQIEAQPRRQYLLLHALREALGAAQPDNLKPYVEDVWALLFQRCESPEEGTRCVVAECIGKLVFVNPPYLLPRFRKQLAAGQPYTRSTVITAVKFLISDQPHSIDPLLKSFIAEFMESLQDPDLNVRRATLTFFNSAVHNKPSLVRDLLDDILPLLYQETKIRRDLIREVEMGPFKHTVDDGLDVRKAAFECMYSLLESCLGQLDMCEFLNHVEDGLKDHYDIRMLTFIMLARLATLCPAPVLQRVDRLIEPLRATCTAKVKAGSVKQELEKQEELKRSAMRAVAALLTNPEVRKSPTVADFSAQIRSNPELTTLFESIQKDTASGPSTDSMELS</sequence>
<evidence type="ECO:0000250" key="1"/>
<evidence type="ECO:0000250" key="2">
    <source>
        <dbReference type="UniProtKB" id="O75155"/>
    </source>
</evidence>
<evidence type="ECO:0000256" key="3">
    <source>
        <dbReference type="SAM" id="MobiDB-lite"/>
    </source>
</evidence>
<evidence type="ECO:0000269" key="4">
    <source>
    </source>
</evidence>
<evidence type="ECO:0000305" key="5"/>
<organism>
    <name type="scientific">Mus musculus</name>
    <name type="common">Mouse</name>
    <dbReference type="NCBI Taxonomy" id="10090"/>
    <lineage>
        <taxon>Eukaryota</taxon>
        <taxon>Metazoa</taxon>
        <taxon>Chordata</taxon>
        <taxon>Craniata</taxon>
        <taxon>Vertebrata</taxon>
        <taxon>Euteleostomi</taxon>
        <taxon>Mammalia</taxon>
        <taxon>Eutheria</taxon>
        <taxon>Euarchontoglires</taxon>
        <taxon>Glires</taxon>
        <taxon>Rodentia</taxon>
        <taxon>Myomorpha</taxon>
        <taxon>Muroidea</taxon>
        <taxon>Muridae</taxon>
        <taxon>Murinae</taxon>
        <taxon>Mus</taxon>
        <taxon>Mus</taxon>
    </lineage>
</organism>
<comment type="function">
    <text evidence="1">Probable assembly factor of SCF (SKP1-CUL1-F-box protein) E3 ubiquitin ligase complexes that promotes the exchange of the substrate-recognition F-box subunit in SCF complexes, thereby playing a key role in the cellular repertoire of SCF complexes.</text>
</comment>
<comment type="subunit">
    <text evidence="1">Binds TBP, CNOT3 and UBE3C.</text>
</comment>
<comment type="interaction">
    <interactant intactId="EBI-6504831">
        <id>Q6ZQ73</id>
    </interactant>
    <interactant intactId="EBI-743073">
        <id>O75175</id>
        <label>CNOT3</label>
    </interactant>
    <organismsDiffer>true</organismsDiffer>
    <experiments>3</experiments>
</comment>
<comment type="subcellular location">
    <subcellularLocation>
        <location evidence="1">Nucleus</location>
    </subcellularLocation>
</comment>
<comment type="tissue specificity">
    <text evidence="4">Highly expressed in embryonic limb buds.</text>
</comment>
<comment type="PTM">
    <text evidence="1">Ubiquitinated and targeted for proteasomal degradation.</text>
</comment>
<comment type="similarity">
    <text evidence="5">Belongs to the CAND family.</text>
</comment>
<comment type="sequence caution" evidence="5">
    <conflict type="erroneous initiation">
        <sequence resource="EMBL-CDS" id="BAC97996"/>
    </conflict>
</comment>